<name>ZNT9_MOUSE</name>
<comment type="function">
    <text evidence="1 4 5">Acts as a zinc transporter involved in intracellular zinc homeostasis (By similarity). Functions as a secondary coactivator for nuclear receptors by cooperating with p160 coactivators subtypes (PubMed:15988012). Plays a role in transcriptional activation of Wnt-responsive genes (PubMed:17344318).</text>
</comment>
<comment type="function">
    <text evidence="1 4 5">Mitochondrial proton-coupled zinc ion antiporter mediating the export of zinc from the mitochondria and involved in zinc homeostasis, zinc mobilization as well as mitochondrial morphology and health (By similarity). In nucleus, functions as a secondary coactivator for nuclear receptors by cooperating with p160 coactivators subtypes. Plays a role in transcriptional activation of Wnt-responsive genes (PubMed:15988012, PubMed:17344318).</text>
</comment>
<comment type="catalytic activity">
    <reaction evidence="1">
        <text>Zn(2+)(in) + 2 H(+)(out) = Zn(2+)(out) + 2 H(+)(in)</text>
        <dbReference type="Rhea" id="RHEA:72627"/>
        <dbReference type="ChEBI" id="CHEBI:15378"/>
        <dbReference type="ChEBI" id="CHEBI:29105"/>
    </reaction>
</comment>
<comment type="subunit">
    <text evidence="4 5">Interacts with GRIP1, ESR1, AR and CTNNB1.</text>
</comment>
<comment type="subcellular location">
    <subcellularLocation>
        <location evidence="1">Mitochondrion membrane</location>
        <topology evidence="1">Multi-pass membrane protein</topology>
    </subcellularLocation>
    <subcellularLocation>
        <location evidence="3">Nucleus</location>
    </subcellularLocation>
    <subcellularLocation>
        <location evidence="1">Endoplasmic reticulum</location>
    </subcellularLocation>
    <text evidence="1">Partial co-localization with endoplasmic reticulum. Linked to mitochondrial ribosomes.</text>
</comment>
<comment type="alternative products">
    <event type="alternative splicing"/>
    <isoform>
        <id>Q5IRJ6-1</id>
        <name>1</name>
        <sequence type="displayed"/>
    </isoform>
    <isoform>
        <id>Q5IRJ6-2</id>
        <name>2</name>
        <sequence type="described" ref="VSP_027088"/>
    </isoform>
</comment>
<comment type="similarity">
    <text evidence="7">Belongs to the cation diffusion facilitator (CDF) transporter (TC 2.A.4) family. SLC30A subfamily.</text>
</comment>
<gene>
    <name type="primary">Slc30a9</name>
</gene>
<dbReference type="EMBL" id="AY682914">
    <property type="protein sequence ID" value="AAV85854.1"/>
    <property type="molecule type" value="mRNA"/>
</dbReference>
<dbReference type="EMBL" id="AK028885">
    <property type="protein sequence ID" value="BAC26172.1"/>
    <property type="molecule type" value="mRNA"/>
</dbReference>
<dbReference type="EMBL" id="AK033990">
    <property type="protein sequence ID" value="BAC28540.1"/>
    <property type="molecule type" value="mRNA"/>
</dbReference>
<dbReference type="EMBL" id="AK035541">
    <property type="protein sequence ID" value="BAC29097.1"/>
    <property type="molecule type" value="mRNA"/>
</dbReference>
<dbReference type="EMBL" id="AK082853">
    <property type="protein sequence ID" value="BAC38654.1"/>
    <property type="molecule type" value="mRNA"/>
</dbReference>
<dbReference type="EMBL" id="BC027806">
    <property type="protein sequence ID" value="AAH27806.1"/>
    <property type="molecule type" value="mRNA"/>
</dbReference>
<dbReference type="EMBL" id="BC026565">
    <property type="protein sequence ID" value="AAH26565.1"/>
    <property type="molecule type" value="mRNA"/>
</dbReference>
<dbReference type="EMBL" id="BC031705">
    <property type="protein sequence ID" value="AAH31705.1"/>
    <property type="molecule type" value="mRNA"/>
</dbReference>
<dbReference type="EMBL" id="BC055773">
    <property type="protein sequence ID" value="AAH55773.1"/>
    <property type="molecule type" value="mRNA"/>
</dbReference>
<dbReference type="EMBL" id="BC078440">
    <property type="protein sequence ID" value="AAH78440.1"/>
    <property type="molecule type" value="mRNA"/>
</dbReference>
<dbReference type="EMBL" id="AF263460">
    <property type="protein sequence ID" value="AAF73055.1"/>
    <property type="molecule type" value="mRNA"/>
</dbReference>
<dbReference type="CCDS" id="CCDS39103.1">
    <molecule id="Q5IRJ6-1"/>
</dbReference>
<dbReference type="RefSeq" id="NP_001297558.1">
    <property type="nucleotide sequence ID" value="NM_001310629.1"/>
</dbReference>
<dbReference type="RefSeq" id="NP_848766.2">
    <molecule id="Q5IRJ6-1"/>
    <property type="nucleotide sequence ID" value="NM_178651.4"/>
</dbReference>
<dbReference type="BioGRID" id="224557">
    <property type="interactions" value="6"/>
</dbReference>
<dbReference type="FunCoup" id="Q5IRJ6">
    <property type="interactions" value="4064"/>
</dbReference>
<dbReference type="STRING" id="10090.ENSMUSP00000124047"/>
<dbReference type="iPTMnet" id="Q5IRJ6"/>
<dbReference type="PhosphoSitePlus" id="Q5IRJ6"/>
<dbReference type="PaxDb" id="10090-ENSMUSP00000124047"/>
<dbReference type="PeptideAtlas" id="Q5IRJ6"/>
<dbReference type="ProteomicsDB" id="275153">
    <molecule id="Q5IRJ6-1"/>
</dbReference>
<dbReference type="ProteomicsDB" id="275154">
    <molecule id="Q5IRJ6-2"/>
</dbReference>
<dbReference type="Pumba" id="Q5IRJ6"/>
<dbReference type="Antibodypedia" id="1339">
    <property type="antibodies" value="152 antibodies from 27 providers"/>
</dbReference>
<dbReference type="DNASU" id="109108"/>
<dbReference type="Ensembl" id="ENSMUST00000162372.8">
    <molecule id="Q5IRJ6-1"/>
    <property type="protein sequence ID" value="ENSMUSP00000124047.2"/>
    <property type="gene ID" value="ENSMUSG00000029221.16"/>
</dbReference>
<dbReference type="GeneID" id="109108"/>
<dbReference type="KEGG" id="mmu:109108"/>
<dbReference type="UCSC" id="uc008xpt.1">
    <molecule id="Q5IRJ6-1"/>
    <property type="organism name" value="mouse"/>
</dbReference>
<dbReference type="AGR" id="MGI:1923690"/>
<dbReference type="CTD" id="10463"/>
<dbReference type="MGI" id="MGI:1923690">
    <property type="gene designation" value="Slc30a9"/>
</dbReference>
<dbReference type="VEuPathDB" id="HostDB:ENSMUSG00000029221"/>
<dbReference type="eggNOG" id="KOG2802">
    <property type="taxonomic scope" value="Eukaryota"/>
</dbReference>
<dbReference type="GeneTree" id="ENSGT00390000008346"/>
<dbReference type="InParanoid" id="Q5IRJ6"/>
<dbReference type="OMA" id="HSMFSEC"/>
<dbReference type="OrthoDB" id="435980at2759"/>
<dbReference type="PhylomeDB" id="Q5IRJ6"/>
<dbReference type="TreeFam" id="TF314526"/>
<dbReference type="BioGRID-ORCS" id="109108">
    <property type="hits" value="16 hits in 76 CRISPR screens"/>
</dbReference>
<dbReference type="ChiTaRS" id="Slc30a9">
    <property type="organism name" value="mouse"/>
</dbReference>
<dbReference type="PRO" id="PR:Q5IRJ6"/>
<dbReference type="Proteomes" id="UP000000589">
    <property type="component" value="Chromosome 5"/>
</dbReference>
<dbReference type="RNAct" id="Q5IRJ6">
    <property type="molecule type" value="protein"/>
</dbReference>
<dbReference type="Bgee" id="ENSMUSG00000029221">
    <property type="expression patterns" value="Expressed in superior frontal gyrus and 265 other cell types or tissues"/>
</dbReference>
<dbReference type="ExpressionAtlas" id="Q5IRJ6">
    <property type="expression patterns" value="baseline and differential"/>
</dbReference>
<dbReference type="GO" id="GO:0005737">
    <property type="term" value="C:cytoplasm"/>
    <property type="evidence" value="ECO:0000266"/>
    <property type="project" value="MGI"/>
</dbReference>
<dbReference type="GO" id="GO:0031410">
    <property type="term" value="C:cytoplasmic vesicle"/>
    <property type="evidence" value="ECO:0000250"/>
    <property type="project" value="UniProtKB"/>
</dbReference>
<dbReference type="GO" id="GO:0005856">
    <property type="term" value="C:cytoskeleton"/>
    <property type="evidence" value="ECO:0007669"/>
    <property type="project" value="Ensembl"/>
</dbReference>
<dbReference type="GO" id="GO:0005783">
    <property type="term" value="C:endoplasmic reticulum"/>
    <property type="evidence" value="ECO:0000250"/>
    <property type="project" value="UniProtKB"/>
</dbReference>
<dbReference type="GO" id="GO:0031966">
    <property type="term" value="C:mitochondrial membrane"/>
    <property type="evidence" value="ECO:0000250"/>
    <property type="project" value="UniProtKB"/>
</dbReference>
<dbReference type="GO" id="GO:0005634">
    <property type="term" value="C:nucleus"/>
    <property type="evidence" value="ECO:0000266"/>
    <property type="project" value="MGI"/>
</dbReference>
<dbReference type="GO" id="GO:0015297">
    <property type="term" value="F:antiporter activity"/>
    <property type="evidence" value="ECO:0007669"/>
    <property type="project" value="UniProtKB-KW"/>
</dbReference>
<dbReference type="GO" id="GO:0003682">
    <property type="term" value="F:chromatin binding"/>
    <property type="evidence" value="ECO:0000314"/>
    <property type="project" value="MGI"/>
</dbReference>
<dbReference type="GO" id="GO:0016922">
    <property type="term" value="F:nuclear receptor binding"/>
    <property type="evidence" value="ECO:0000353"/>
    <property type="project" value="MGI"/>
</dbReference>
<dbReference type="GO" id="GO:0003713">
    <property type="term" value="F:transcription coactivator activity"/>
    <property type="evidence" value="ECO:0000316"/>
    <property type="project" value="MGI"/>
</dbReference>
<dbReference type="GO" id="GO:0005385">
    <property type="term" value="F:zinc ion transmembrane transporter activity"/>
    <property type="evidence" value="ECO:0000250"/>
    <property type="project" value="UniProtKB"/>
</dbReference>
<dbReference type="GO" id="GO:0006882">
    <property type="term" value="P:intracellular zinc ion homeostasis"/>
    <property type="evidence" value="ECO:0000250"/>
    <property type="project" value="UniProtKB"/>
</dbReference>
<dbReference type="GO" id="GO:0045944">
    <property type="term" value="P:positive regulation of transcription by RNA polymerase II"/>
    <property type="evidence" value="ECO:0000314"/>
    <property type="project" value="MGI"/>
</dbReference>
<dbReference type="GO" id="GO:0010821">
    <property type="term" value="P:regulation of mitochondrion organization"/>
    <property type="evidence" value="ECO:0000250"/>
    <property type="project" value="UniProtKB"/>
</dbReference>
<dbReference type="GO" id="GO:0006829">
    <property type="term" value="P:zinc ion transport"/>
    <property type="evidence" value="ECO:0000250"/>
    <property type="project" value="UniProtKB"/>
</dbReference>
<dbReference type="CDD" id="cd21078">
    <property type="entry name" value="NTD_ZNT9"/>
    <property type="match status" value="1"/>
</dbReference>
<dbReference type="FunFam" id="1.20.1510.10:FF:000004">
    <property type="entry name" value="zinc transporter 9 isoform X1"/>
    <property type="match status" value="1"/>
</dbReference>
<dbReference type="FunFam" id="3.90.530.10:FF:000002">
    <property type="entry name" value="zinc transporter 9 isoform X1"/>
    <property type="match status" value="1"/>
</dbReference>
<dbReference type="Gene3D" id="1.20.1510.10">
    <property type="entry name" value="Cation efflux protein transmembrane domain"/>
    <property type="match status" value="1"/>
</dbReference>
<dbReference type="Gene3D" id="3.90.530.10">
    <property type="entry name" value="XPA C-terminal domain"/>
    <property type="match status" value="1"/>
</dbReference>
<dbReference type="InterPro" id="IPR002524">
    <property type="entry name" value="Cation_efflux"/>
</dbReference>
<dbReference type="InterPro" id="IPR027469">
    <property type="entry name" value="Cation_efflux_TMD_sf"/>
</dbReference>
<dbReference type="InterPro" id="IPR009061">
    <property type="entry name" value="DNA-bd_dom_put_sf"/>
</dbReference>
<dbReference type="InterPro" id="IPR040177">
    <property type="entry name" value="SLC30A9"/>
</dbReference>
<dbReference type="InterPro" id="IPR037129">
    <property type="entry name" value="XPA_sf"/>
</dbReference>
<dbReference type="NCBIfam" id="TIGR01297">
    <property type="entry name" value="CDF"/>
    <property type="match status" value="1"/>
</dbReference>
<dbReference type="PANTHER" id="PTHR13414">
    <property type="entry name" value="HUEL-CATION TRANSPORTER"/>
    <property type="match status" value="1"/>
</dbReference>
<dbReference type="PANTHER" id="PTHR13414:SF9">
    <property type="entry name" value="PROTON-COUPLED ZINC ANTIPORTER SLC30A9, MITOCHONDRIAL"/>
    <property type="match status" value="1"/>
</dbReference>
<dbReference type="Pfam" id="PF01545">
    <property type="entry name" value="Cation_efflux"/>
    <property type="match status" value="1"/>
</dbReference>
<dbReference type="SUPFAM" id="SSF161111">
    <property type="entry name" value="Cation efflux protein transmembrane domain-like"/>
    <property type="match status" value="1"/>
</dbReference>
<dbReference type="SUPFAM" id="SSF46955">
    <property type="entry name" value="Putative DNA-binding domain"/>
    <property type="match status" value="1"/>
</dbReference>
<accession>Q5IRJ6</accession>
<accession>Q66L46</accession>
<accession>Q7TNE9</accession>
<accession>Q8BGX8</accession>
<accession>Q8BUR1</accession>
<accession>Q8BZP2</accession>
<accession>Q8K2E0</accession>
<accession>Q8K376</accession>
<accession>Q8R0P1</accession>
<accession>Q9JK46</accession>
<organism>
    <name type="scientific">Mus musculus</name>
    <name type="common">Mouse</name>
    <dbReference type="NCBI Taxonomy" id="10090"/>
    <lineage>
        <taxon>Eukaryota</taxon>
        <taxon>Metazoa</taxon>
        <taxon>Chordata</taxon>
        <taxon>Craniata</taxon>
        <taxon>Vertebrata</taxon>
        <taxon>Euteleostomi</taxon>
        <taxon>Mammalia</taxon>
        <taxon>Eutheria</taxon>
        <taxon>Euarchontoglires</taxon>
        <taxon>Glires</taxon>
        <taxon>Rodentia</taxon>
        <taxon>Myomorpha</taxon>
        <taxon>Muroidea</taxon>
        <taxon>Muridae</taxon>
        <taxon>Murinae</taxon>
        <taxon>Mus</taxon>
        <taxon>Mus</taxon>
    </lineage>
</organism>
<protein>
    <recommendedName>
        <fullName>Proton-coupled zinc antiporter SLC30A9, mitochondrial</fullName>
    </recommendedName>
    <alternativeName>
        <fullName>GRIP1-associated coactivator 63</fullName>
        <shortName>GAC63</shortName>
    </alternativeName>
    <alternativeName>
        <fullName>Solute carrier family 30 member 9</fullName>
    </alternativeName>
    <alternativeName>
        <fullName>Zinc transporter 9</fullName>
        <shortName>ZnT-9</shortName>
    </alternativeName>
</protein>
<feature type="chain" id="PRO_0000295806" description="Proton-coupled zinc antiporter SLC30A9, mitochondrial">
    <location>
        <begin position="1"/>
        <end position="567"/>
    </location>
</feature>
<feature type="transmembrane region" description="Helical" evidence="2">
    <location>
        <begin position="238"/>
        <end position="258"/>
    </location>
</feature>
<feature type="transmembrane region" description="Helical" evidence="2">
    <location>
        <begin position="313"/>
        <end position="333"/>
    </location>
</feature>
<feature type="transmembrane region" description="Helical" evidence="2">
    <location>
        <begin position="341"/>
        <end position="361"/>
    </location>
</feature>
<feature type="transmembrane region" description="Helical" evidence="2">
    <location>
        <begin position="391"/>
        <end position="411"/>
    </location>
</feature>
<feature type="transmembrane region" description="Helical" evidence="2">
    <location>
        <begin position="423"/>
        <end position="443"/>
    </location>
</feature>
<feature type="short sequence motif" description="LXXLL motif" evidence="1">
    <location>
        <begin position="461"/>
        <end position="465"/>
    </location>
</feature>
<feature type="splice variant" id="VSP_027088" description="In isoform 2." evidence="6">
    <original>MFPGLA</original>
    <variation>MESVGAAGGSEAGGGVRVGASAPPGCFRAWP</variation>
    <location>
        <begin position="1"/>
        <end position="6"/>
    </location>
</feature>
<feature type="sequence conflict" description="In Ref. 3; AAH27806." evidence="7" ref="3">
    <original>GWKN</original>
    <variation>HASD</variation>
    <location>
        <begin position="35"/>
        <end position="38"/>
    </location>
</feature>
<feature type="sequence conflict" description="In Ref. 1; AAV85854 and 3; AAH27806." evidence="7" ref="1 3">
    <original>V</original>
    <variation>A</variation>
    <location>
        <position position="91"/>
    </location>
</feature>
<feature type="sequence conflict" description="In Ref. 3; AAH31705." evidence="7" ref="3">
    <original>T</original>
    <variation>S</variation>
    <location>
        <position position="376"/>
    </location>
</feature>
<keyword id="KW-0025">Alternative splicing</keyword>
<keyword id="KW-0050">Antiport</keyword>
<keyword id="KW-0256">Endoplasmic reticulum</keyword>
<keyword id="KW-0406">Ion transport</keyword>
<keyword id="KW-0472">Membrane</keyword>
<keyword id="KW-0496">Mitochondrion</keyword>
<keyword id="KW-0539">Nucleus</keyword>
<keyword id="KW-1185">Reference proteome</keyword>
<keyword id="KW-0804">Transcription</keyword>
<keyword id="KW-0805">Transcription regulation</keyword>
<keyword id="KW-0812">Transmembrane</keyword>
<keyword id="KW-1133">Transmembrane helix</keyword>
<keyword id="KW-0813">Transport</keyword>
<keyword id="KW-0862">Zinc</keyword>
<keyword id="KW-0864">Zinc transport</keyword>
<reference key="1">
    <citation type="journal article" date="2005" name="Mol. Cell. Biol.">
        <title>GAC63, a GRIP1-dependent nuclear receptor coactivator.</title>
        <authorList>
            <person name="Chen Y.-H."/>
            <person name="Kim J.H."/>
            <person name="Stallcup M.R."/>
        </authorList>
    </citation>
    <scope>NUCLEOTIDE SEQUENCE [MRNA] (ISOFORM 1)</scope>
    <scope>FUNCTION</scope>
    <scope>INTERACTION WITH GRIP1; ESR1 AND AR</scope>
</reference>
<reference key="2">
    <citation type="journal article" date="2005" name="Science">
        <title>The transcriptional landscape of the mammalian genome.</title>
        <authorList>
            <person name="Carninci P."/>
            <person name="Kasukawa T."/>
            <person name="Katayama S."/>
            <person name="Gough J."/>
            <person name="Frith M.C."/>
            <person name="Maeda N."/>
            <person name="Oyama R."/>
            <person name="Ravasi T."/>
            <person name="Lenhard B."/>
            <person name="Wells C."/>
            <person name="Kodzius R."/>
            <person name="Shimokawa K."/>
            <person name="Bajic V.B."/>
            <person name="Brenner S.E."/>
            <person name="Batalov S."/>
            <person name="Forrest A.R."/>
            <person name="Zavolan M."/>
            <person name="Davis M.J."/>
            <person name="Wilming L.G."/>
            <person name="Aidinis V."/>
            <person name="Allen J.E."/>
            <person name="Ambesi-Impiombato A."/>
            <person name="Apweiler R."/>
            <person name="Aturaliya R.N."/>
            <person name="Bailey T.L."/>
            <person name="Bansal M."/>
            <person name="Baxter L."/>
            <person name="Beisel K.W."/>
            <person name="Bersano T."/>
            <person name="Bono H."/>
            <person name="Chalk A.M."/>
            <person name="Chiu K.P."/>
            <person name="Choudhary V."/>
            <person name="Christoffels A."/>
            <person name="Clutterbuck D.R."/>
            <person name="Crowe M.L."/>
            <person name="Dalla E."/>
            <person name="Dalrymple B.P."/>
            <person name="de Bono B."/>
            <person name="Della Gatta G."/>
            <person name="di Bernardo D."/>
            <person name="Down T."/>
            <person name="Engstrom P."/>
            <person name="Fagiolini M."/>
            <person name="Faulkner G."/>
            <person name="Fletcher C.F."/>
            <person name="Fukushima T."/>
            <person name="Furuno M."/>
            <person name="Futaki S."/>
            <person name="Gariboldi M."/>
            <person name="Georgii-Hemming P."/>
            <person name="Gingeras T.R."/>
            <person name="Gojobori T."/>
            <person name="Green R.E."/>
            <person name="Gustincich S."/>
            <person name="Harbers M."/>
            <person name="Hayashi Y."/>
            <person name="Hensch T.K."/>
            <person name="Hirokawa N."/>
            <person name="Hill D."/>
            <person name="Huminiecki L."/>
            <person name="Iacono M."/>
            <person name="Ikeo K."/>
            <person name="Iwama A."/>
            <person name="Ishikawa T."/>
            <person name="Jakt M."/>
            <person name="Kanapin A."/>
            <person name="Katoh M."/>
            <person name="Kawasawa Y."/>
            <person name="Kelso J."/>
            <person name="Kitamura H."/>
            <person name="Kitano H."/>
            <person name="Kollias G."/>
            <person name="Krishnan S.P."/>
            <person name="Kruger A."/>
            <person name="Kummerfeld S.K."/>
            <person name="Kurochkin I.V."/>
            <person name="Lareau L.F."/>
            <person name="Lazarevic D."/>
            <person name="Lipovich L."/>
            <person name="Liu J."/>
            <person name="Liuni S."/>
            <person name="McWilliam S."/>
            <person name="Madan Babu M."/>
            <person name="Madera M."/>
            <person name="Marchionni L."/>
            <person name="Matsuda H."/>
            <person name="Matsuzawa S."/>
            <person name="Miki H."/>
            <person name="Mignone F."/>
            <person name="Miyake S."/>
            <person name="Morris K."/>
            <person name="Mottagui-Tabar S."/>
            <person name="Mulder N."/>
            <person name="Nakano N."/>
            <person name="Nakauchi H."/>
            <person name="Ng P."/>
            <person name="Nilsson R."/>
            <person name="Nishiguchi S."/>
            <person name="Nishikawa S."/>
            <person name="Nori F."/>
            <person name="Ohara O."/>
            <person name="Okazaki Y."/>
            <person name="Orlando V."/>
            <person name="Pang K.C."/>
            <person name="Pavan W.J."/>
            <person name="Pavesi G."/>
            <person name="Pesole G."/>
            <person name="Petrovsky N."/>
            <person name="Piazza S."/>
            <person name="Reed J."/>
            <person name="Reid J.F."/>
            <person name="Ring B.Z."/>
            <person name="Ringwald M."/>
            <person name="Rost B."/>
            <person name="Ruan Y."/>
            <person name="Salzberg S.L."/>
            <person name="Sandelin A."/>
            <person name="Schneider C."/>
            <person name="Schoenbach C."/>
            <person name="Sekiguchi K."/>
            <person name="Semple C.A."/>
            <person name="Seno S."/>
            <person name="Sessa L."/>
            <person name="Sheng Y."/>
            <person name="Shibata Y."/>
            <person name="Shimada H."/>
            <person name="Shimada K."/>
            <person name="Silva D."/>
            <person name="Sinclair B."/>
            <person name="Sperling S."/>
            <person name="Stupka E."/>
            <person name="Sugiura K."/>
            <person name="Sultana R."/>
            <person name="Takenaka Y."/>
            <person name="Taki K."/>
            <person name="Tammoja K."/>
            <person name="Tan S.L."/>
            <person name="Tang S."/>
            <person name="Taylor M.S."/>
            <person name="Tegner J."/>
            <person name="Teichmann S.A."/>
            <person name="Ueda H.R."/>
            <person name="van Nimwegen E."/>
            <person name="Verardo R."/>
            <person name="Wei C.L."/>
            <person name="Yagi K."/>
            <person name="Yamanishi H."/>
            <person name="Zabarovsky E."/>
            <person name="Zhu S."/>
            <person name="Zimmer A."/>
            <person name="Hide W."/>
            <person name="Bult C."/>
            <person name="Grimmond S.M."/>
            <person name="Teasdale R.D."/>
            <person name="Liu E.T."/>
            <person name="Brusic V."/>
            <person name="Quackenbush J."/>
            <person name="Wahlestedt C."/>
            <person name="Mattick J.S."/>
            <person name="Hume D.A."/>
            <person name="Kai C."/>
            <person name="Sasaki D."/>
            <person name="Tomaru Y."/>
            <person name="Fukuda S."/>
            <person name="Kanamori-Katayama M."/>
            <person name="Suzuki M."/>
            <person name="Aoki J."/>
            <person name="Arakawa T."/>
            <person name="Iida J."/>
            <person name="Imamura K."/>
            <person name="Itoh M."/>
            <person name="Kato T."/>
            <person name="Kawaji H."/>
            <person name="Kawagashira N."/>
            <person name="Kawashima T."/>
            <person name="Kojima M."/>
            <person name="Kondo S."/>
            <person name="Konno H."/>
            <person name="Nakano K."/>
            <person name="Ninomiya N."/>
            <person name="Nishio T."/>
            <person name="Okada M."/>
            <person name="Plessy C."/>
            <person name="Shibata K."/>
            <person name="Shiraki T."/>
            <person name="Suzuki S."/>
            <person name="Tagami M."/>
            <person name="Waki K."/>
            <person name="Watahiki A."/>
            <person name="Okamura-Oho Y."/>
            <person name="Suzuki H."/>
            <person name="Kawai J."/>
            <person name="Hayashizaki Y."/>
        </authorList>
    </citation>
    <scope>NUCLEOTIDE SEQUENCE [LARGE SCALE MRNA] (ISOFORMS 1 AND 2)</scope>
    <source>
        <strain>C57BL/6J</strain>
        <tissue>Diencephalon</tissue>
        <tissue>Skin</tissue>
        <tissue>Urinary bladder</tissue>
    </source>
</reference>
<reference key="3">
    <citation type="journal article" date="2004" name="Genome Res.">
        <title>The status, quality, and expansion of the NIH full-length cDNA project: the Mammalian Gene Collection (MGC).</title>
        <authorList>
            <consortium name="The MGC Project Team"/>
        </authorList>
    </citation>
    <scope>NUCLEOTIDE SEQUENCE [LARGE SCALE MRNA] OF 35-567 (ISOFORMS 1/2)</scope>
    <source>
        <strain>C57BL/6J</strain>
        <strain>Czech II</strain>
        <strain>FVB/N</strain>
        <tissue>Brain</tissue>
        <tissue>Kidney</tissue>
        <tissue>Mammary tumor</tissue>
    </source>
</reference>
<reference key="4">
    <citation type="journal article" date="2002" name="Int. J. Biochem. Cell Biol.">
        <title>The novel human HUEL (C4orf1) protein shares homology with the DNA-binding domain of the XPA DNA repair protein and displays nuclear translocation in a cell cycle-dependent manner.</title>
        <authorList>
            <person name="Sim D.L.C."/>
            <person name="Yeo W.M."/>
            <person name="Chow V.T.K."/>
        </authorList>
    </citation>
    <scope>NUCLEOTIDE SEQUENCE [MRNA] OF 104-533 (ISOFORMS 1/2)</scope>
    <scope>SUBCELLULAR LOCATION</scope>
</reference>
<reference key="5">
    <citation type="journal article" date="2007" name="Nucleic Acids Res.">
        <title>Role of GAC63 in transcriptional activation mediated by beta-catenin.</title>
        <authorList>
            <person name="Chen Y.H."/>
            <person name="Yang C.K."/>
            <person name="Xia M."/>
            <person name="Ou C.Y."/>
            <person name="Stallcup M.R."/>
        </authorList>
    </citation>
    <scope>FUNCTION</scope>
    <scope>INTERACTION WITH CTNNB1</scope>
</reference>
<reference key="6">
    <citation type="journal article" date="2010" name="Cell">
        <title>A tissue-specific atlas of mouse protein phosphorylation and expression.</title>
        <authorList>
            <person name="Huttlin E.L."/>
            <person name="Jedrychowski M.P."/>
            <person name="Elias J.E."/>
            <person name="Goswami T."/>
            <person name="Rad R."/>
            <person name="Beausoleil S.A."/>
            <person name="Villen J."/>
            <person name="Haas W."/>
            <person name="Sowa M.E."/>
            <person name="Gygi S.P."/>
        </authorList>
    </citation>
    <scope>IDENTIFICATION BY MASS SPECTROMETRY [LARGE SCALE ANALYSIS]</scope>
    <source>
        <tissue>Brain</tissue>
        <tissue>Brown adipose tissue</tissue>
        <tissue>Heart</tissue>
        <tissue>Testis</tissue>
    </source>
</reference>
<proteinExistence type="evidence at protein level"/>
<evidence type="ECO:0000250" key="1">
    <source>
        <dbReference type="UniProtKB" id="Q6PML9"/>
    </source>
</evidence>
<evidence type="ECO:0000255" key="2"/>
<evidence type="ECO:0000269" key="3">
    <source>
    </source>
</evidence>
<evidence type="ECO:0000269" key="4">
    <source>
    </source>
</evidence>
<evidence type="ECO:0000269" key="5">
    <source>
    </source>
</evidence>
<evidence type="ECO:0000303" key="6">
    <source>
    </source>
</evidence>
<evidence type="ECO:0000305" key="7"/>
<sequence>MFPGLAAAAAAHRCSWAALCRLGGGRAATRGRSQGWKNVMTFESFTYVVPDIHPHLSIINQVKLYSTNVQKGGQGSQTPKADKVPSLTQTVENIGAELKAPLKQDPLQVRVKAVLKKRDYGSKYTKNNFITGVRAINEFCLKSSDLEQLRKIRRRSPHDDTESFTVFLRSDVEAKALEVWGSLEALAREKKLRKEAEIEYRERLFRNQRILREYGDFLGNTKPRSRAVSVFLKGPGKVVMVAICINGLNCFFKFLAWIYTGSASMFSEAIHSLSDTCNQGLLALGISKSVQTPDPSHPYGFSNMRYISSLISGVGIFMMGAGLSWYHGIMGLLHPQPMESLLWAYCILAGSLVSEGATLLVAINELRRSAQAKGTTFYKYVMESRDPSTNVILLEDTAAVLGVIIAATCMGLTSITGNPLYDSLGSLGVGTLLGVVSAFLIYTNTEALLGRSIQPEQVQRLTELLESDPSVRAIHDVKATDLGLGKVRFKAEVDFDGRVVTRSYLEKQDFDQMMQEIQEVKTPEQLEAFMLKHGENIIDTLGAEVDRLEKELKKRNPEVRHVDLEIL</sequence>